<organism>
    <name type="scientific">Laccaria bicolor</name>
    <name type="common">Bicoloured deceiver</name>
    <name type="synonym">Laccaria laccata var. bicolor</name>
    <dbReference type="NCBI Taxonomy" id="29883"/>
    <lineage>
        <taxon>Eukaryota</taxon>
        <taxon>Fungi</taxon>
        <taxon>Dikarya</taxon>
        <taxon>Basidiomycota</taxon>
        <taxon>Agaricomycotina</taxon>
        <taxon>Agaricomycetes</taxon>
        <taxon>Agaricomycetidae</taxon>
        <taxon>Agaricales</taxon>
        <taxon>Agaricineae</taxon>
        <taxon>Hydnangiaceae</taxon>
        <taxon>Laccaria</taxon>
    </lineage>
</organism>
<feature type="chain" id="PRO_0000457449" description="Aquaporin-3">
    <location>
        <begin position="1"/>
        <end position="330"/>
    </location>
</feature>
<feature type="topological domain" description="Cytoplasmic" evidence="8">
    <location>
        <begin position="1"/>
        <end position="40"/>
    </location>
</feature>
<feature type="transmembrane region" description="Helical" evidence="2">
    <location>
        <begin position="41"/>
        <end position="61"/>
    </location>
</feature>
<feature type="topological domain" description="Extracellular" evidence="8">
    <location>
        <begin position="62"/>
        <end position="71"/>
    </location>
</feature>
<feature type="transmembrane region" description="Helical" evidence="2">
    <location>
        <begin position="72"/>
        <end position="92"/>
    </location>
</feature>
<feature type="topological domain" description="Cytoplasmic" evidence="8">
    <location>
        <begin position="93"/>
        <end position="124"/>
    </location>
</feature>
<feature type="transmembrane region" description="Helical" evidence="2">
    <location>
        <begin position="125"/>
        <end position="145"/>
    </location>
</feature>
<feature type="topological domain" description="Extracellular" evidence="8">
    <location>
        <begin position="146"/>
        <end position="157"/>
    </location>
</feature>
<feature type="transmembrane region" description="Helical" evidence="2">
    <location>
        <begin position="158"/>
        <end position="178"/>
    </location>
</feature>
<feature type="topological domain" description="Cytoplasmic" evidence="8">
    <location>
        <begin position="179"/>
        <end position="183"/>
    </location>
</feature>
<feature type="transmembrane region" description="Helical" evidence="2">
    <location>
        <begin position="184"/>
        <end position="204"/>
    </location>
</feature>
<feature type="topological domain" description="Extracellular" evidence="8">
    <location>
        <begin position="205"/>
        <end position="207"/>
    </location>
</feature>
<feature type="transmembrane region" description="Helical" evidence="2">
    <location>
        <begin position="208"/>
        <end position="228"/>
    </location>
</feature>
<feature type="topological domain" description="Cytoplasmic" evidence="8">
    <location>
        <begin position="229"/>
        <end position="264"/>
    </location>
</feature>
<feature type="transmembrane region" description="Helical" evidence="2">
    <location>
        <begin position="265"/>
        <end position="285"/>
    </location>
</feature>
<feature type="topological domain" description="Extracellular" evidence="8">
    <location>
        <begin position="286"/>
        <end position="330"/>
    </location>
</feature>
<feature type="region of interest" description="Disordered" evidence="3">
    <location>
        <begin position="308"/>
        <end position="330"/>
    </location>
</feature>
<feature type="short sequence motif" description="NPA 1" evidence="1">
    <location>
        <begin position="99"/>
        <end position="101"/>
    </location>
</feature>
<feature type="short sequence motif" description="NPA 2" evidence="1">
    <location>
        <begin position="238"/>
        <end position="240"/>
    </location>
</feature>
<feature type="compositionally biased region" description="Acidic residues" evidence="3">
    <location>
        <begin position="314"/>
        <end position="324"/>
    </location>
</feature>
<comment type="function">
    <text evidence="4 5">Water channel required to facilitate the transport of water across membranes (PubMed:25323307). Also mediates the transport of carbon dioxide across the membrane (PubMed:25857333).</text>
</comment>
<comment type="catalytic activity">
    <reaction evidence="4">
        <text>H2O(in) = H2O(out)</text>
        <dbReference type="Rhea" id="RHEA:29667"/>
        <dbReference type="ChEBI" id="CHEBI:15377"/>
    </reaction>
</comment>
<comment type="catalytic activity">
    <reaction evidence="5">
        <text>CO2(out) = CO2(in)</text>
        <dbReference type="Rhea" id="RHEA:74891"/>
        <dbReference type="ChEBI" id="CHEBI:16526"/>
    </reaction>
</comment>
<comment type="subcellular location">
    <subcellularLocation>
        <location evidence="9">Cell membrane</location>
        <topology evidence="2">Multi-pass membrane protein</topology>
    </subcellularLocation>
</comment>
<comment type="induction">
    <text evidence="6">Expression is low in vegetative mycelia and up-regulated during development of the basidiocarp.</text>
</comment>
<comment type="domain">
    <text evidence="1">Aquaporins contain two tandem repeats each containing three membrane-spanning domains and a pore-forming loop with the signature motif Asn-Pro-Ala (NPA) (By similarity). AQP3 has NPC/NSA motifs which is in accordance with the fungal aquaporins (NPx and NxA) (By similarity).</text>
</comment>
<comment type="similarity">
    <text evidence="8">Belongs to the MIP/aquaporin (TC 1.A.8) family.</text>
</comment>
<reference key="1">
    <citation type="journal article" date="2015" name="New Phytol.">
        <title>Overexpression of Laccaria bicolor aquaporin JQ585595 alters root water transport properties in ectomycorrhizal white spruce (Picea glauca) seedlings.</title>
        <authorList>
            <person name="Xu H."/>
            <person name="Kemppainen M."/>
            <person name="El Kayal W."/>
            <person name="Lee S.H."/>
            <person name="Pardo A.G."/>
            <person name="Cooke J.E."/>
            <person name="Zwiazek J.J."/>
        </authorList>
    </citation>
    <scope>NUCLEOTIDE SEQUENCE [MRNA]</scope>
    <scope>FUNCTION</scope>
    <scope>TRANSPORTER ACTIVITY</scope>
    <source>
        <strain>UAMH8232</strain>
    </source>
</reference>
<reference key="2">
    <citation type="journal article" date="2015" name="Plant Cell Environ.">
        <title>Laccaria bicolor aquaporin LbAQP1 is required for Hartig net development in trembling aspen (Populus tremuloides).</title>
        <authorList>
            <person name="Navarro-RoDenas A."/>
            <person name="Xu H."/>
            <person name="Kemppainen M."/>
            <person name="Pardo A.G."/>
            <person name="Zwiazek J.J."/>
        </authorList>
    </citation>
    <scope>FUNCTION</scope>
    <scope>TRANSPORTER ACTIVITY</scope>
</reference>
<reference key="3">
    <citation type="journal article" date="2016" name="Mycorrhiza">
        <title>Transcript profiling of aquaporins during basidiocarp development in Laccaria bicolor ectomycorrhizal with Picea glauca.</title>
        <authorList>
            <person name="Xu H."/>
            <person name="Navarro-Rodenas A."/>
            <person name="Cooke J.E."/>
            <person name="Zwiazek J.J."/>
        </authorList>
    </citation>
    <scope>INDUCTION</scope>
</reference>
<sequence length="330" mass="35792">MSATPIIHLRDVKKRTGVLNAWERVRNKPQVHWAMECFAEALGVFFYVYFGLGSTAAWVIGNILKQSGLSSVFQIGFAYAFGILFAIGVCAATSGGHFNPCVTIAFTIFRGFPPLKAVRYIVAQILGAYIASALVYNQWKVLIVESELLLKQAGVYETTMFTPNGPAGIFALYLLPGAQTLPRAFLNEFVNCFVLALVIWAALDPTSFMIPPVMAPFIIAAAYAGSIWGYAVPAISLNSARDIGCRLFALTIWGKSAAGGSYSAIAALVNIPATLLAAVVYELFLVDSDRVVAGSHLEFMNVAANHRRHRQQAEDDNLVEADDSSQEKPV</sequence>
<gene>
    <name evidence="7" type="primary">AQP3</name>
</gene>
<accession>I1Z8E6</accession>
<keyword id="KW-1003">Cell membrane</keyword>
<keyword id="KW-0472">Membrane</keyword>
<keyword id="KW-0677">Repeat</keyword>
<keyword id="KW-0812">Transmembrane</keyword>
<keyword id="KW-1133">Transmembrane helix</keyword>
<keyword id="KW-0813">Transport</keyword>
<name>AQP3_LACBI</name>
<evidence type="ECO:0000250" key="1">
    <source>
        <dbReference type="UniProtKB" id="B0DPL3"/>
    </source>
</evidence>
<evidence type="ECO:0000255" key="2"/>
<evidence type="ECO:0000256" key="3">
    <source>
        <dbReference type="SAM" id="MobiDB-lite"/>
    </source>
</evidence>
<evidence type="ECO:0000269" key="4">
    <source>
    </source>
</evidence>
<evidence type="ECO:0000269" key="5">
    <source>
    </source>
</evidence>
<evidence type="ECO:0000269" key="6">
    <source>
    </source>
</evidence>
<evidence type="ECO:0000303" key="7">
    <source>
    </source>
</evidence>
<evidence type="ECO:0000305" key="8"/>
<evidence type="ECO:0000305" key="9">
    <source>
    </source>
</evidence>
<proteinExistence type="evidence at transcript level"/>
<protein>
    <recommendedName>
        <fullName evidence="7">Aquaporin-3</fullName>
    </recommendedName>
</protein>
<dbReference type="EMBL" id="JQ585593">
    <property type="protein sequence ID" value="AFJ15556.1"/>
    <property type="molecule type" value="mRNA"/>
</dbReference>
<dbReference type="SMR" id="I1Z8E6"/>
<dbReference type="GO" id="GO:0005886">
    <property type="term" value="C:plasma membrane"/>
    <property type="evidence" value="ECO:0007669"/>
    <property type="project" value="UniProtKB-SubCell"/>
</dbReference>
<dbReference type="GO" id="GO:0015254">
    <property type="term" value="F:glycerol channel activity"/>
    <property type="evidence" value="ECO:0007669"/>
    <property type="project" value="TreeGrafter"/>
</dbReference>
<dbReference type="GO" id="GO:0015250">
    <property type="term" value="F:water channel activity"/>
    <property type="evidence" value="ECO:0007669"/>
    <property type="project" value="TreeGrafter"/>
</dbReference>
<dbReference type="Gene3D" id="1.20.1080.10">
    <property type="entry name" value="Glycerol uptake facilitator protein"/>
    <property type="match status" value="1"/>
</dbReference>
<dbReference type="InterPro" id="IPR023271">
    <property type="entry name" value="Aquaporin-like"/>
</dbReference>
<dbReference type="InterPro" id="IPR000425">
    <property type="entry name" value="MIP"/>
</dbReference>
<dbReference type="InterPro" id="IPR050363">
    <property type="entry name" value="MIP/Aquaporin"/>
</dbReference>
<dbReference type="PANTHER" id="PTHR43829:SF14">
    <property type="entry name" value="AQUAPORIN 3"/>
    <property type="match status" value="1"/>
</dbReference>
<dbReference type="PANTHER" id="PTHR43829">
    <property type="entry name" value="AQUAPORIN OR AQUAGLYCEROPORIN RELATED"/>
    <property type="match status" value="1"/>
</dbReference>
<dbReference type="Pfam" id="PF00230">
    <property type="entry name" value="MIP"/>
    <property type="match status" value="1"/>
</dbReference>
<dbReference type="PRINTS" id="PR00783">
    <property type="entry name" value="MINTRINSICP"/>
</dbReference>
<dbReference type="SUPFAM" id="SSF81338">
    <property type="entry name" value="Aquaporin-like"/>
    <property type="match status" value="1"/>
</dbReference>